<keyword id="KW-0067">ATP-binding</keyword>
<keyword id="KW-0547">Nucleotide-binding</keyword>
<keyword id="KW-0548">Nucleotidyltransferase</keyword>
<keyword id="KW-0808">Transferase</keyword>
<accession>B5Z3B4</accession>
<gene>
    <name evidence="1" type="primary">cysD</name>
    <name type="ordered locus">ECH74115_4004</name>
</gene>
<sequence>MDQIRLTHLRQLEAESIHIIREVAAEFSNPVMLYSIGKDSSVMLHLARKAFYPGTLPFPLLHVDTGWKFREMYEFRDRTAKAYGCELLVHQNPEGVAMGINPFVHGSAKHTDIMKTEGLKQALNKYGFDAAFGGARRDEEKSRAKERIYSFRDRFHRWDPKNQRPELWHNYNGQINKGESIRVFPLSNWTEQDIWQYIWLENIDIVPLYLAAERPVLERDGMLMMIDDNRIDLQPGEVIKKRMVRFRTLGCWPLTGAVESNAQTLPEIIEEMLVSTTSERQGRVIDRDQAGSMELKKRQGYF</sequence>
<feature type="chain" id="PRO_1000092201" description="Sulfate adenylyltransferase subunit 2">
    <location>
        <begin position="1"/>
        <end position="302"/>
    </location>
</feature>
<protein>
    <recommendedName>
        <fullName evidence="1">Sulfate adenylyltransferase subunit 2</fullName>
        <ecNumber evidence="1">2.7.7.4</ecNumber>
    </recommendedName>
    <alternativeName>
        <fullName evidence="1">ATP-sulfurylase small subunit</fullName>
    </alternativeName>
    <alternativeName>
        <fullName evidence="1">Sulfate adenylate transferase</fullName>
        <shortName evidence="1">SAT</shortName>
    </alternativeName>
</protein>
<reference key="1">
    <citation type="journal article" date="2011" name="Proc. Natl. Acad. Sci. U.S.A.">
        <title>Genomic anatomy of Escherichia coli O157:H7 outbreaks.</title>
        <authorList>
            <person name="Eppinger M."/>
            <person name="Mammel M.K."/>
            <person name="Leclerc J.E."/>
            <person name="Ravel J."/>
            <person name="Cebula T.A."/>
        </authorList>
    </citation>
    <scope>NUCLEOTIDE SEQUENCE [LARGE SCALE GENOMIC DNA]</scope>
    <source>
        <strain>EC4115 / EHEC</strain>
    </source>
</reference>
<dbReference type="EC" id="2.7.7.4" evidence="1"/>
<dbReference type="EMBL" id="CP001164">
    <property type="protein sequence ID" value="ACI39802.1"/>
    <property type="molecule type" value="Genomic_DNA"/>
</dbReference>
<dbReference type="RefSeq" id="WP_000372111.1">
    <property type="nucleotide sequence ID" value="NC_011353.1"/>
</dbReference>
<dbReference type="SMR" id="B5Z3B4"/>
<dbReference type="KEGG" id="ecf:ECH74115_4004"/>
<dbReference type="HOGENOM" id="CLU_043026_0_0_6"/>
<dbReference type="UniPathway" id="UPA00140">
    <property type="reaction ID" value="UER00204"/>
</dbReference>
<dbReference type="GO" id="GO:0005524">
    <property type="term" value="F:ATP binding"/>
    <property type="evidence" value="ECO:0007669"/>
    <property type="project" value="UniProtKB-KW"/>
</dbReference>
<dbReference type="GO" id="GO:0004781">
    <property type="term" value="F:sulfate adenylyltransferase (ATP) activity"/>
    <property type="evidence" value="ECO:0007669"/>
    <property type="project" value="UniProtKB-UniRule"/>
</dbReference>
<dbReference type="GO" id="GO:0070814">
    <property type="term" value="P:hydrogen sulfide biosynthetic process"/>
    <property type="evidence" value="ECO:0007669"/>
    <property type="project" value="UniProtKB-UniRule"/>
</dbReference>
<dbReference type="GO" id="GO:0000103">
    <property type="term" value="P:sulfate assimilation"/>
    <property type="evidence" value="ECO:0007669"/>
    <property type="project" value="UniProtKB-UniRule"/>
</dbReference>
<dbReference type="CDD" id="cd23946">
    <property type="entry name" value="Sulfate_adenylyltransferase_2"/>
    <property type="match status" value="1"/>
</dbReference>
<dbReference type="FunFam" id="3.40.50.620:FF:000002">
    <property type="entry name" value="Sulfate adenylyltransferase subunit 2"/>
    <property type="match status" value="1"/>
</dbReference>
<dbReference type="Gene3D" id="3.40.50.620">
    <property type="entry name" value="HUPs"/>
    <property type="match status" value="1"/>
</dbReference>
<dbReference type="HAMAP" id="MF_00064">
    <property type="entry name" value="Sulf_adenylyltr_sub2"/>
    <property type="match status" value="1"/>
</dbReference>
<dbReference type="InterPro" id="IPR002500">
    <property type="entry name" value="PAPS_reduct_dom"/>
</dbReference>
<dbReference type="InterPro" id="IPR014729">
    <property type="entry name" value="Rossmann-like_a/b/a_fold"/>
</dbReference>
<dbReference type="InterPro" id="IPR011784">
    <property type="entry name" value="SO4_adenylTrfase_ssu"/>
</dbReference>
<dbReference type="InterPro" id="IPR050128">
    <property type="entry name" value="Sulfate_adenylyltrnsfr_sub2"/>
</dbReference>
<dbReference type="NCBIfam" id="TIGR02039">
    <property type="entry name" value="CysD"/>
    <property type="match status" value="1"/>
</dbReference>
<dbReference type="NCBIfam" id="NF003587">
    <property type="entry name" value="PRK05253.1"/>
    <property type="match status" value="1"/>
</dbReference>
<dbReference type="NCBIfam" id="NF009214">
    <property type="entry name" value="PRK12563.1"/>
    <property type="match status" value="1"/>
</dbReference>
<dbReference type="PANTHER" id="PTHR43196">
    <property type="entry name" value="SULFATE ADENYLYLTRANSFERASE SUBUNIT 2"/>
    <property type="match status" value="1"/>
</dbReference>
<dbReference type="PANTHER" id="PTHR43196:SF1">
    <property type="entry name" value="SULFATE ADENYLYLTRANSFERASE SUBUNIT 2"/>
    <property type="match status" value="1"/>
</dbReference>
<dbReference type="Pfam" id="PF01507">
    <property type="entry name" value="PAPS_reduct"/>
    <property type="match status" value="1"/>
</dbReference>
<dbReference type="PIRSF" id="PIRSF002936">
    <property type="entry name" value="CysDAde_trans"/>
    <property type="match status" value="1"/>
</dbReference>
<dbReference type="SUPFAM" id="SSF52402">
    <property type="entry name" value="Adenine nucleotide alpha hydrolases-like"/>
    <property type="match status" value="1"/>
</dbReference>
<evidence type="ECO:0000255" key="1">
    <source>
        <dbReference type="HAMAP-Rule" id="MF_00064"/>
    </source>
</evidence>
<organism>
    <name type="scientific">Escherichia coli O157:H7 (strain EC4115 / EHEC)</name>
    <dbReference type="NCBI Taxonomy" id="444450"/>
    <lineage>
        <taxon>Bacteria</taxon>
        <taxon>Pseudomonadati</taxon>
        <taxon>Pseudomonadota</taxon>
        <taxon>Gammaproteobacteria</taxon>
        <taxon>Enterobacterales</taxon>
        <taxon>Enterobacteriaceae</taxon>
        <taxon>Escherichia</taxon>
    </lineage>
</organism>
<proteinExistence type="inferred from homology"/>
<comment type="function">
    <text evidence="1">With CysN forms the ATP sulfurylase (ATPS) that catalyzes the adenylation of sulfate producing adenosine 5'-phosphosulfate (APS) and diphosphate, the first enzymatic step in sulfur assimilation pathway. APS synthesis involves the formation of a high-energy phosphoric-sulfuric acid anhydride bond driven by GTP hydrolysis by CysN coupled to ATP hydrolysis by CysD.</text>
</comment>
<comment type="catalytic activity">
    <reaction evidence="1">
        <text>sulfate + ATP + H(+) = adenosine 5'-phosphosulfate + diphosphate</text>
        <dbReference type="Rhea" id="RHEA:18133"/>
        <dbReference type="ChEBI" id="CHEBI:15378"/>
        <dbReference type="ChEBI" id="CHEBI:16189"/>
        <dbReference type="ChEBI" id="CHEBI:30616"/>
        <dbReference type="ChEBI" id="CHEBI:33019"/>
        <dbReference type="ChEBI" id="CHEBI:58243"/>
        <dbReference type="EC" id="2.7.7.4"/>
    </reaction>
</comment>
<comment type="pathway">
    <text evidence="1">Sulfur metabolism; hydrogen sulfide biosynthesis; sulfite from sulfate: step 1/3.</text>
</comment>
<comment type="subunit">
    <text evidence="1">Heterodimer composed of CysD, the smaller subunit, and CysN.</text>
</comment>
<comment type="similarity">
    <text evidence="1">Belongs to the PAPS reductase family. CysD subfamily.</text>
</comment>
<name>CYSD_ECO5E</name>